<reference key="1">
    <citation type="submission" date="2009-06" db="EMBL/GenBank/DDBJ databases">
        <title>Complete sequence of Thermotogales bacterium TBF 19.5.1.</title>
        <authorList>
            <consortium name="US DOE Joint Genome Institute"/>
            <person name="Lucas S."/>
            <person name="Copeland A."/>
            <person name="Lapidus A."/>
            <person name="Glavina del Rio T."/>
            <person name="Tice H."/>
            <person name="Bruce D."/>
            <person name="Goodwin L."/>
            <person name="Pitluck S."/>
            <person name="Chertkov O."/>
            <person name="Brettin T."/>
            <person name="Detter J.C."/>
            <person name="Han C."/>
            <person name="Schmutz J."/>
            <person name="Larimer F."/>
            <person name="Land M."/>
            <person name="Hauser L."/>
            <person name="Kyrpides N."/>
            <person name="Ovchinnikova G."/>
            <person name="Noll K."/>
        </authorList>
    </citation>
    <scope>NUCLEOTIDE SEQUENCE [LARGE SCALE GENOMIC DNA]</scope>
    <source>
        <strain>ATCC BAA-1733 / DSM 21960 / TBF 19.5.1</strain>
    </source>
</reference>
<feature type="chain" id="PRO_0000409826" description="DNA gyrase subunit A">
    <location>
        <begin position="1"/>
        <end position="812"/>
    </location>
</feature>
<feature type="domain" description="Topo IIA-type catalytic" evidence="2">
    <location>
        <begin position="31"/>
        <end position="496"/>
    </location>
</feature>
<feature type="short sequence motif" description="GyrA-box" evidence="1">
    <location>
        <begin position="523"/>
        <end position="529"/>
    </location>
</feature>
<feature type="active site" description="O-(5'-phospho-DNA)-tyrosine intermediate" evidence="1">
    <location>
        <position position="119"/>
    </location>
</feature>
<keyword id="KW-0067">ATP-binding</keyword>
<keyword id="KW-0963">Cytoplasm</keyword>
<keyword id="KW-0238">DNA-binding</keyword>
<keyword id="KW-0413">Isomerase</keyword>
<keyword id="KW-0547">Nucleotide-binding</keyword>
<keyword id="KW-1185">Reference proteome</keyword>
<keyword id="KW-0799">Topoisomerase</keyword>
<organism>
    <name type="scientific">Kosmotoga olearia (strain ATCC BAA-1733 / DSM 21960 / TBF 19.5.1)</name>
    <dbReference type="NCBI Taxonomy" id="521045"/>
    <lineage>
        <taxon>Bacteria</taxon>
        <taxon>Thermotogati</taxon>
        <taxon>Thermotogota</taxon>
        <taxon>Thermotogae</taxon>
        <taxon>Kosmotogales</taxon>
        <taxon>Kosmotogaceae</taxon>
        <taxon>Kosmotoga</taxon>
    </lineage>
</organism>
<protein>
    <recommendedName>
        <fullName evidence="1">DNA gyrase subunit A</fullName>
        <ecNumber evidence="1">5.6.2.2</ecNumber>
    </recommendedName>
</protein>
<gene>
    <name evidence="1" type="primary">gyrA</name>
    <name type="ordered locus">Kole_0018</name>
</gene>
<comment type="function">
    <text evidence="1">A type II topoisomerase that negatively supercoils closed circular double-stranded (ds) DNA in an ATP-dependent manner to modulate DNA topology and maintain chromosomes in an underwound state. Negative supercoiling favors strand separation, and DNA replication, transcription, recombination and repair, all of which involve strand separation. Also able to catalyze the interconversion of other topological isomers of dsDNA rings, including catenanes and knotted rings. Type II topoisomerases break and join 2 DNA strands simultaneously in an ATP-dependent manner.</text>
</comment>
<comment type="catalytic activity">
    <reaction evidence="1">
        <text>ATP-dependent breakage, passage and rejoining of double-stranded DNA.</text>
        <dbReference type="EC" id="5.6.2.2"/>
    </reaction>
</comment>
<comment type="subunit">
    <text evidence="1">Heterotetramer, composed of two GyrA and two GyrB chains. In the heterotetramer, GyrA contains the active site tyrosine that forms a transient covalent intermediate with DNA, while GyrB binds cofactors and catalyzes ATP hydrolysis.</text>
</comment>
<comment type="subcellular location">
    <subcellularLocation>
        <location evidence="1">Cytoplasm</location>
    </subcellularLocation>
</comment>
<comment type="miscellaneous">
    <text evidence="1">Few gyrases are as efficient as E.coli at forming negative supercoils. Not all organisms have 2 type II topoisomerases; in organisms with a single type II topoisomerase this enzyme also has to decatenate newly replicated chromosomes.</text>
</comment>
<comment type="similarity">
    <text evidence="1">Belongs to the type II topoisomerase GyrA/ParC subunit family.</text>
</comment>
<name>GYRA_KOSOT</name>
<sequence>MPEEIISRSINDEMITSYMLYSMSVIVGRAIPDVRDGLKPVQRKILFGMLELGLRHNQSYKKSARIVGEVMGKFHPHGDMAIYDALVRMAQPFSMRYPLIQGQGNFGSIDRDPPAAMRYTEARMQRLAEELLADIDKNTVKMIPNFDGSLIEPEVLPAKAPNLLMNGASGIAVGMMTNIPPHNLSELVEALTALIDNPDATIEELMEYVKGPDFPTGGIIMGRDGIKKMYETGRGRMVVRGVAEIEEAKGGTRIVISEIPYGVSKADLIQQIANVAQNVRDIQVRNVRDESDKRGLRVVIELKRGADPNVVLNLLYKHTQLQTTFGAHMLVIDEKKRPKLMNLKEIFQAFIKHRYEVVKRRTEYELEQASKKAHILEGLTKASRAIDTVVDIIRNSKNIQEASVNLQETLEITPEQSQAILEMRLGKLTALEIDKLVTEYAELVEKIKEYREILSDDKNIYQIIKKELQELEAQYGDARRTKISIDGNTDFNVEDVIPDDEVVVTVTKKGYIKATPLEDYRKQGRGGKGIRGVKTTDADFVTNVVSTTRLSKTVVITSKGKAYFINNYELECTSRSSRGKLLANYVKIEPDETVQAVLSVKREEVANKHLIITTRKGKIKRTPFEAFINSRTSGIKAITLNEGDSVVDAGISTSEEETIIISTRKGMVIRFPISQIRPMGRTAAGVKAMALRGDDEVVSATIVLPVDERYLFTATERGVGKRTPLSEYRPQHRAGMGVKNIYGLERTGYVVGSLVVTNEDEIIVITKNGMSIRIPAADIRPTGRVTKGVKVVELRDDDTVASLAVVVDQAEV</sequence>
<evidence type="ECO:0000255" key="1">
    <source>
        <dbReference type="HAMAP-Rule" id="MF_01897"/>
    </source>
</evidence>
<evidence type="ECO:0000255" key="2">
    <source>
        <dbReference type="PROSITE-ProRule" id="PRU01384"/>
    </source>
</evidence>
<proteinExistence type="inferred from homology"/>
<dbReference type="EC" id="5.6.2.2" evidence="1"/>
<dbReference type="EMBL" id="CP001634">
    <property type="protein sequence ID" value="ACR78747.1"/>
    <property type="molecule type" value="Genomic_DNA"/>
</dbReference>
<dbReference type="RefSeq" id="WP_012744535.1">
    <property type="nucleotide sequence ID" value="NC_012785.1"/>
</dbReference>
<dbReference type="SMR" id="C5CHA8"/>
<dbReference type="STRING" id="521045.Kole_0018"/>
<dbReference type="KEGG" id="kol:Kole_0018"/>
<dbReference type="eggNOG" id="COG0188">
    <property type="taxonomic scope" value="Bacteria"/>
</dbReference>
<dbReference type="HOGENOM" id="CLU_002977_6_1_0"/>
<dbReference type="OrthoDB" id="9806486at2"/>
<dbReference type="Proteomes" id="UP000002382">
    <property type="component" value="Chromosome"/>
</dbReference>
<dbReference type="GO" id="GO:0005694">
    <property type="term" value="C:chromosome"/>
    <property type="evidence" value="ECO:0007669"/>
    <property type="project" value="InterPro"/>
</dbReference>
<dbReference type="GO" id="GO:0005737">
    <property type="term" value="C:cytoplasm"/>
    <property type="evidence" value="ECO:0007669"/>
    <property type="project" value="UniProtKB-SubCell"/>
</dbReference>
<dbReference type="GO" id="GO:0009330">
    <property type="term" value="C:DNA topoisomerase type II (double strand cut, ATP-hydrolyzing) complex"/>
    <property type="evidence" value="ECO:0007669"/>
    <property type="project" value="TreeGrafter"/>
</dbReference>
<dbReference type="GO" id="GO:0005524">
    <property type="term" value="F:ATP binding"/>
    <property type="evidence" value="ECO:0007669"/>
    <property type="project" value="UniProtKB-UniRule"/>
</dbReference>
<dbReference type="GO" id="GO:0003677">
    <property type="term" value="F:DNA binding"/>
    <property type="evidence" value="ECO:0007669"/>
    <property type="project" value="UniProtKB-UniRule"/>
</dbReference>
<dbReference type="GO" id="GO:0034335">
    <property type="term" value="F:DNA negative supercoiling activity"/>
    <property type="evidence" value="ECO:0007669"/>
    <property type="project" value="UniProtKB-ARBA"/>
</dbReference>
<dbReference type="GO" id="GO:0006265">
    <property type="term" value="P:DNA topological change"/>
    <property type="evidence" value="ECO:0007669"/>
    <property type="project" value="UniProtKB-UniRule"/>
</dbReference>
<dbReference type="GO" id="GO:0006261">
    <property type="term" value="P:DNA-templated DNA replication"/>
    <property type="evidence" value="ECO:0007669"/>
    <property type="project" value="UniProtKB-UniRule"/>
</dbReference>
<dbReference type="CDD" id="cd00187">
    <property type="entry name" value="TOP4c"/>
    <property type="match status" value="1"/>
</dbReference>
<dbReference type="FunFam" id="1.10.268.10:FF:000001">
    <property type="entry name" value="DNA gyrase subunit A"/>
    <property type="match status" value="1"/>
</dbReference>
<dbReference type="FunFam" id="3.30.1360.40:FF:000002">
    <property type="entry name" value="DNA gyrase subunit A"/>
    <property type="match status" value="1"/>
</dbReference>
<dbReference type="FunFam" id="3.90.199.10:FF:000001">
    <property type="entry name" value="DNA gyrase subunit A"/>
    <property type="match status" value="1"/>
</dbReference>
<dbReference type="FunFam" id="2.120.10.90:FF:000005">
    <property type="entry name" value="DNA topoisomerase 4 subunit A"/>
    <property type="match status" value="1"/>
</dbReference>
<dbReference type="Gene3D" id="3.30.1360.40">
    <property type="match status" value="1"/>
</dbReference>
<dbReference type="Gene3D" id="2.120.10.90">
    <property type="entry name" value="DNA gyrase/topoisomerase IV, subunit A, C-terminal"/>
    <property type="match status" value="1"/>
</dbReference>
<dbReference type="Gene3D" id="3.90.199.10">
    <property type="entry name" value="Topoisomerase II, domain 5"/>
    <property type="match status" value="1"/>
</dbReference>
<dbReference type="Gene3D" id="1.10.268.10">
    <property type="entry name" value="Topoisomerase, domain 3"/>
    <property type="match status" value="1"/>
</dbReference>
<dbReference type="HAMAP" id="MF_01897">
    <property type="entry name" value="GyrA"/>
    <property type="match status" value="1"/>
</dbReference>
<dbReference type="InterPro" id="IPR005743">
    <property type="entry name" value="GyrA"/>
</dbReference>
<dbReference type="InterPro" id="IPR006691">
    <property type="entry name" value="GyrA/parC_rep"/>
</dbReference>
<dbReference type="InterPro" id="IPR035516">
    <property type="entry name" value="Gyrase/topoIV_suA_C"/>
</dbReference>
<dbReference type="InterPro" id="IPR013760">
    <property type="entry name" value="Topo_IIA-like_dom_sf"/>
</dbReference>
<dbReference type="InterPro" id="IPR013758">
    <property type="entry name" value="Topo_IIA_A/C_ab"/>
</dbReference>
<dbReference type="InterPro" id="IPR013757">
    <property type="entry name" value="Topo_IIA_A_a_sf"/>
</dbReference>
<dbReference type="InterPro" id="IPR002205">
    <property type="entry name" value="Topo_IIA_dom_A"/>
</dbReference>
<dbReference type="InterPro" id="IPR050220">
    <property type="entry name" value="Type_II_DNA_Topoisomerases"/>
</dbReference>
<dbReference type="NCBIfam" id="TIGR01063">
    <property type="entry name" value="gyrA"/>
    <property type="match status" value="1"/>
</dbReference>
<dbReference type="NCBIfam" id="NF004043">
    <property type="entry name" value="PRK05560.1"/>
    <property type="match status" value="1"/>
</dbReference>
<dbReference type="NCBIfam" id="NF004044">
    <property type="entry name" value="PRK05561.1"/>
    <property type="match status" value="1"/>
</dbReference>
<dbReference type="PANTHER" id="PTHR43493:SF5">
    <property type="entry name" value="DNA GYRASE SUBUNIT A, CHLOROPLASTIC_MITOCHONDRIAL"/>
    <property type="match status" value="1"/>
</dbReference>
<dbReference type="PANTHER" id="PTHR43493">
    <property type="entry name" value="DNA GYRASE/TOPOISOMERASE SUBUNIT A"/>
    <property type="match status" value="1"/>
</dbReference>
<dbReference type="Pfam" id="PF03989">
    <property type="entry name" value="DNA_gyraseA_C"/>
    <property type="match status" value="6"/>
</dbReference>
<dbReference type="Pfam" id="PF00521">
    <property type="entry name" value="DNA_topoisoIV"/>
    <property type="match status" value="1"/>
</dbReference>
<dbReference type="SMART" id="SM00434">
    <property type="entry name" value="TOP4c"/>
    <property type="match status" value="1"/>
</dbReference>
<dbReference type="SUPFAM" id="SSF101904">
    <property type="entry name" value="GyrA/ParC C-terminal domain-like"/>
    <property type="match status" value="1"/>
</dbReference>
<dbReference type="SUPFAM" id="SSF56719">
    <property type="entry name" value="Type II DNA topoisomerase"/>
    <property type="match status" value="1"/>
</dbReference>
<dbReference type="PROSITE" id="PS52040">
    <property type="entry name" value="TOPO_IIA"/>
    <property type="match status" value="1"/>
</dbReference>
<accession>C5CHA8</accession>